<protein>
    <recommendedName>
        <fullName evidence="1">Tetraacyldisaccharide 4'-kinase</fullName>
        <ecNumber evidence="1">2.7.1.130</ecNumber>
    </recommendedName>
    <alternativeName>
        <fullName evidence="1">Lipid A 4'-kinase</fullName>
    </alternativeName>
</protein>
<organism>
    <name type="scientific">Yersinia pestis (strain Pestoides F)</name>
    <dbReference type="NCBI Taxonomy" id="386656"/>
    <lineage>
        <taxon>Bacteria</taxon>
        <taxon>Pseudomonadati</taxon>
        <taxon>Pseudomonadota</taxon>
        <taxon>Gammaproteobacteria</taxon>
        <taxon>Enterobacterales</taxon>
        <taxon>Yersiniaceae</taxon>
        <taxon>Yersinia</taxon>
    </lineage>
</organism>
<keyword id="KW-0067">ATP-binding</keyword>
<keyword id="KW-0418">Kinase</keyword>
<keyword id="KW-0441">Lipid A biosynthesis</keyword>
<keyword id="KW-0444">Lipid biosynthesis</keyword>
<keyword id="KW-0443">Lipid metabolism</keyword>
<keyword id="KW-0547">Nucleotide-binding</keyword>
<keyword id="KW-0808">Transferase</keyword>
<dbReference type="EC" id="2.7.1.130" evidence="1"/>
<dbReference type="EMBL" id="CP000668">
    <property type="protein sequence ID" value="ABP40674.1"/>
    <property type="molecule type" value="Genomic_DNA"/>
</dbReference>
<dbReference type="RefSeq" id="WP_002211319.1">
    <property type="nucleotide sequence ID" value="NZ_CP009715.1"/>
</dbReference>
<dbReference type="SMR" id="A4TN12"/>
<dbReference type="GeneID" id="57977192"/>
<dbReference type="KEGG" id="ypp:YPDSF_2299"/>
<dbReference type="PATRIC" id="fig|386656.14.peg.3792"/>
<dbReference type="UniPathway" id="UPA00359">
    <property type="reaction ID" value="UER00482"/>
</dbReference>
<dbReference type="GO" id="GO:0005886">
    <property type="term" value="C:plasma membrane"/>
    <property type="evidence" value="ECO:0007669"/>
    <property type="project" value="TreeGrafter"/>
</dbReference>
<dbReference type="GO" id="GO:0005524">
    <property type="term" value="F:ATP binding"/>
    <property type="evidence" value="ECO:0007669"/>
    <property type="project" value="UniProtKB-UniRule"/>
</dbReference>
<dbReference type="GO" id="GO:0009029">
    <property type="term" value="F:tetraacyldisaccharide 4'-kinase activity"/>
    <property type="evidence" value="ECO:0007669"/>
    <property type="project" value="UniProtKB-UniRule"/>
</dbReference>
<dbReference type="GO" id="GO:0009245">
    <property type="term" value="P:lipid A biosynthetic process"/>
    <property type="evidence" value="ECO:0007669"/>
    <property type="project" value="UniProtKB-UniRule"/>
</dbReference>
<dbReference type="GO" id="GO:0009244">
    <property type="term" value="P:lipopolysaccharide core region biosynthetic process"/>
    <property type="evidence" value="ECO:0007669"/>
    <property type="project" value="TreeGrafter"/>
</dbReference>
<dbReference type="Gene3D" id="3.40.50.300">
    <property type="entry name" value="P-loop containing nucleotide triphosphate hydrolases"/>
    <property type="match status" value="1"/>
</dbReference>
<dbReference type="HAMAP" id="MF_00409">
    <property type="entry name" value="LpxK"/>
    <property type="match status" value="1"/>
</dbReference>
<dbReference type="InterPro" id="IPR003758">
    <property type="entry name" value="LpxK"/>
</dbReference>
<dbReference type="InterPro" id="IPR027417">
    <property type="entry name" value="P-loop_NTPase"/>
</dbReference>
<dbReference type="NCBIfam" id="TIGR00682">
    <property type="entry name" value="lpxK"/>
    <property type="match status" value="1"/>
</dbReference>
<dbReference type="PANTHER" id="PTHR42724">
    <property type="entry name" value="TETRAACYLDISACCHARIDE 4'-KINASE"/>
    <property type="match status" value="1"/>
</dbReference>
<dbReference type="PANTHER" id="PTHR42724:SF1">
    <property type="entry name" value="TETRAACYLDISACCHARIDE 4'-KINASE, MITOCHONDRIAL-RELATED"/>
    <property type="match status" value="1"/>
</dbReference>
<dbReference type="Pfam" id="PF02606">
    <property type="entry name" value="LpxK"/>
    <property type="match status" value="1"/>
</dbReference>
<dbReference type="SUPFAM" id="SSF52540">
    <property type="entry name" value="P-loop containing nucleoside triphosphate hydrolases"/>
    <property type="match status" value="1"/>
</dbReference>
<name>LPXK_YERPP</name>
<evidence type="ECO:0000255" key="1">
    <source>
        <dbReference type="HAMAP-Rule" id="MF_00409"/>
    </source>
</evidence>
<sequence>MIERIWSGQSRLYLLLLPLSWLYGAVTWLIRASYRLGLRSAWRSPVPVIIVGNLTAGGNGKTPVVIWLVEQLQQRGYRVGVVSRGYGGKSAVYPLLLSDNTTTAQAGDEPVLIFQRTGAPVAVSPKRADAIKALLQSHAVDFIITDDGLQHYALQRDFELVVIDGVRRFGNGWWLPAGPMREREGRLRSVDAAITNGGLAAEGEIPMQLVAREAVNLVTGQRQPAEQLQHVVAMAGIGHPPRFFATLNLLGIKPENEHAFADHQDYSLAQLSRLTSGPQILLMTEKDAVKCRAFALPNWWYLPVDAQLPSDRADKLLLNIQALSPDTK</sequence>
<reference key="1">
    <citation type="submission" date="2007-02" db="EMBL/GenBank/DDBJ databases">
        <title>Complete sequence of chromosome of Yersinia pestis Pestoides F.</title>
        <authorList>
            <consortium name="US DOE Joint Genome Institute"/>
            <person name="Copeland A."/>
            <person name="Lucas S."/>
            <person name="Lapidus A."/>
            <person name="Barry K."/>
            <person name="Detter J.C."/>
            <person name="Glavina del Rio T."/>
            <person name="Hammon N."/>
            <person name="Israni S."/>
            <person name="Dalin E."/>
            <person name="Tice H."/>
            <person name="Pitluck S."/>
            <person name="Di Bartolo G."/>
            <person name="Chain P."/>
            <person name="Malfatti S."/>
            <person name="Shin M."/>
            <person name="Vergez L."/>
            <person name="Schmutz J."/>
            <person name="Larimer F."/>
            <person name="Land M."/>
            <person name="Hauser L."/>
            <person name="Worsham P."/>
            <person name="Chu M."/>
            <person name="Bearden S."/>
            <person name="Garcia E."/>
            <person name="Richardson P."/>
        </authorList>
    </citation>
    <scope>NUCLEOTIDE SEQUENCE [LARGE SCALE GENOMIC DNA]</scope>
    <source>
        <strain>Pestoides F</strain>
    </source>
</reference>
<proteinExistence type="inferred from homology"/>
<comment type="function">
    <text evidence="1">Transfers the gamma-phosphate of ATP to the 4'-position of a tetraacyldisaccharide 1-phosphate intermediate (termed DS-1-P) to form tetraacyldisaccharide 1,4'-bis-phosphate (lipid IVA).</text>
</comment>
<comment type="catalytic activity">
    <reaction evidence="1">
        <text>a lipid A disaccharide + ATP = a lipid IVA + ADP + H(+)</text>
        <dbReference type="Rhea" id="RHEA:67840"/>
        <dbReference type="ChEBI" id="CHEBI:15378"/>
        <dbReference type="ChEBI" id="CHEBI:30616"/>
        <dbReference type="ChEBI" id="CHEBI:176343"/>
        <dbReference type="ChEBI" id="CHEBI:176425"/>
        <dbReference type="ChEBI" id="CHEBI:456216"/>
        <dbReference type="EC" id="2.7.1.130"/>
    </reaction>
</comment>
<comment type="pathway">
    <text evidence="1">Glycolipid biosynthesis; lipid IV(A) biosynthesis; lipid IV(A) from (3R)-3-hydroxytetradecanoyl-[acyl-carrier-protein] and UDP-N-acetyl-alpha-D-glucosamine: step 6/6.</text>
</comment>
<comment type="similarity">
    <text evidence="1">Belongs to the LpxK family.</text>
</comment>
<feature type="chain" id="PRO_1000123756" description="Tetraacyldisaccharide 4'-kinase">
    <location>
        <begin position="1"/>
        <end position="328"/>
    </location>
</feature>
<feature type="binding site" evidence="1">
    <location>
        <begin position="55"/>
        <end position="62"/>
    </location>
    <ligand>
        <name>ATP</name>
        <dbReference type="ChEBI" id="CHEBI:30616"/>
    </ligand>
</feature>
<gene>
    <name evidence="1" type="primary">lpxK</name>
    <name type="ordered locus">YPDSF_2299</name>
</gene>
<accession>A4TN12</accession>